<feature type="chain" id="PRO_0000222798" description="Suppressor of RNA-mediated gene silencing">
    <location>
        <begin position="1"/>
        <end position="353"/>
    </location>
</feature>
<feature type="sequence conflict" description="In Ref. 1; AAA88766." evidence="3" ref="1">
    <original>T</original>
    <variation>I</variation>
    <location>
        <position position="159"/>
    </location>
</feature>
<feature type="sequence conflict" description="In Ref. 1; AAA88766." evidence="3" ref="1">
    <original>D</original>
    <variation>H</variation>
    <location>
        <position position="320"/>
    </location>
</feature>
<feature type="sequence conflict" description="In Ref. 1; AAA88766." evidence="3" ref="1">
    <original>S</original>
    <variation>Y</variation>
    <location>
        <position position="328"/>
    </location>
</feature>
<feature type="sequence conflict" description="In Ref. 1; AAA88766." evidence="3" ref="1">
    <original>A</original>
    <variation>V</variation>
    <location>
        <position position="335"/>
    </location>
</feature>
<evidence type="ECO:0000269" key="1">
    <source>
    </source>
</evidence>
<evidence type="ECO:0000269" key="2">
    <source>
    </source>
</evidence>
<evidence type="ECO:0000305" key="3"/>
<protein>
    <recommendedName>
        <fullName>Suppressor of RNA-mediated gene silencing</fullName>
    </recommendedName>
    <alternativeName>
        <fullName>Non-structural protein 10</fullName>
        <shortName>Pns10</shortName>
    </alternativeName>
</protein>
<reference key="1">
    <citation type="journal article" date="1990" name="Chin. J. Bot.">
        <title>Molecular cloning and sequencing of rice dwarf virus segment 10.</title>
        <authorList>
            <person name="Chu R."/>
            <person name="Zhang X."/>
            <person name="Pan N."/>
            <person name="Chen Z."/>
        </authorList>
    </citation>
    <scope>NUCLEOTIDE SEQUENCE [MRNA]</scope>
</reference>
<reference key="2">
    <citation type="journal article" date="1993" name="Acta Bot. Sin.">
        <title>The cDNA cloning and nucleotide sequence of the gene encoding nonstructural protein of rice dwarf virus genome segment 10.</title>
        <authorList>
            <person name="Chu R."/>
            <person name="Zhang X."/>
            <person name="Pan N."/>
            <person name="Chen Z."/>
        </authorList>
    </citation>
    <scope>NUCLEOTIDE SEQUENCE [GENOMIC RNA]</scope>
</reference>
<reference key="3">
    <citation type="journal article" date="2005" name="J. Virol.">
        <title>Identification of an RNA silencing suppressor from a plant double-stranded RNA virus.</title>
        <authorList>
            <person name="Cao X."/>
            <person name="Zhou P."/>
            <person name="Zhang X."/>
            <person name="Zhu S."/>
            <person name="Zhong X."/>
            <person name="Xiao Q."/>
            <person name="Ding B."/>
            <person name="Li Y."/>
        </authorList>
    </citation>
    <scope>FUNCTION</scope>
</reference>
<reference key="4">
    <citation type="journal article" date="2010" name="Acta Virol.">
        <title>Stable expression of rice dwarf virus Pns10 suppresses the post-transcriptional gene silencing in transgenic Nicotiana benthamiana plants.</title>
        <authorList>
            <person name="Zhou P."/>
            <person name="Ren B."/>
            <person name="Zhang X.M."/>
            <person name="Wang Y."/>
            <person name="Wei C.H."/>
            <person name="Li Y."/>
        </authorList>
    </citation>
    <scope>FUNCTION</scope>
</reference>
<proteinExistence type="evidence at transcript level"/>
<sequence length="353" mass="39247">MEVDTATFVRLHHELLCAHEGPSIISKFDAIKKVKLGTLANQSGGANNITEAFFDKLRNFERKSEAYLASDLAERELTRDTHKAIVFVTKSVLLGGKSLKDLLPYGVIVCAFIFIPETASVLDNVRVMIGNQKRPLTVALIKYMAKSLNCDLVGDSYDTFYYCNSSAYGKNLISVSENDFSNPQRALLSVGDLCYQAARSIHVAAANYIRIFDRMPPGFQPSKHLFRIIGVLDMETLKTMVTSNIAREPGMFSHDNVKDVLHRTGVFSPNHHFSAVILWRGWASTYAYMFNQEQLNMLSGTSGLAGDFGKYKLTYGSTFDEGVIHVQSQFVTPEAVRKRNIYPDLSALKGGSS</sequence>
<dbReference type="EMBL" id="U36567">
    <property type="protein sequence ID" value="AAA88766.1"/>
    <property type="molecule type" value="mRNA"/>
</dbReference>
<dbReference type="EMBL" id="U25671">
    <property type="protein sequence ID" value="AAA70094.1"/>
    <property type="molecule type" value="Genomic_RNA"/>
</dbReference>
<dbReference type="KEGG" id="vg:956501"/>
<dbReference type="Proteomes" id="UP000002239">
    <property type="component" value="Genome"/>
</dbReference>
<dbReference type="InterPro" id="IPR008777">
    <property type="entry name" value="Phytoreo_Pns"/>
</dbReference>
<dbReference type="Pfam" id="PF05451">
    <property type="entry name" value="Phytoreo_Pns"/>
    <property type="match status" value="1"/>
</dbReference>
<organism>
    <name type="scientific">Rice dwarf virus (isolate Fujian)</name>
    <name type="common">RDV</name>
    <dbReference type="NCBI Taxonomy" id="142804"/>
    <lineage>
        <taxon>Viruses</taxon>
        <taxon>Riboviria</taxon>
        <taxon>Orthornavirae</taxon>
        <taxon>Duplornaviricota</taxon>
        <taxon>Resentoviricetes</taxon>
        <taxon>Reovirales</taxon>
        <taxon>Sedoreoviridae</taxon>
        <taxon>Phytoreovirus</taxon>
        <taxon>Rice dwarf virus</taxon>
    </lineage>
</organism>
<accession>Q85434</accession>
<accession>Q85441</accession>
<organismHost>
    <name type="scientific">Alopecurus aequalis</name>
    <dbReference type="NCBI Taxonomy" id="114194"/>
</organismHost>
<organismHost>
    <name type="scientific">Echinochloa crus-galli</name>
    <name type="common">Barnyard grass</name>
    <name type="synonym">Panicum crus-galli</name>
    <dbReference type="NCBI Taxonomy" id="90397"/>
</organismHost>
<organismHost>
    <name type="scientific">Nephotettix cincticeps</name>
    <name type="common">Green rice leafhopper</name>
    <name type="synonym">Selenocephalus cincticeps</name>
    <dbReference type="NCBI Taxonomy" id="94400"/>
</organismHost>
<organismHost>
    <name type="scientific">Oryza sativa</name>
    <name type="common">Rice</name>
    <dbReference type="NCBI Taxonomy" id="4530"/>
</organismHost>
<organismHost>
    <name type="scientific">Paspalum</name>
    <dbReference type="NCBI Taxonomy" id="147271"/>
</organismHost>
<comment type="function">
    <text evidence="1 2">Suppressor of RNA-mediated gene silencing, also known as post-transcriptional gene silencing (PTGS), a mechanism of plant viral defense that limits the accumulation of viral RNAs.</text>
</comment>
<comment type="similarity">
    <text evidence="3">Belongs to the phytoreovirus non-structural protein 10 family.</text>
</comment>
<keyword id="KW-1185">Reference proteome</keyword>
<name>VSR_RDVF</name>